<sequence>MGFLKFSPFLVVSILLLYQACGLQAVPLRSTLESSPGMATLSEEEARLLAALVQNYMQMKVRELEQEEEQEAEGSSLDSPRSKRCGNLSTCMLGTYTQDLNKFHTFPQTSIGVGAPGKKRDMAKDLETNHHPYFGN</sequence>
<organism>
    <name type="scientific">Rattus norvegicus</name>
    <name type="common">Rat</name>
    <dbReference type="NCBI Taxonomy" id="10116"/>
    <lineage>
        <taxon>Eukaryota</taxon>
        <taxon>Metazoa</taxon>
        <taxon>Chordata</taxon>
        <taxon>Craniata</taxon>
        <taxon>Vertebrata</taxon>
        <taxon>Euteleostomi</taxon>
        <taxon>Mammalia</taxon>
        <taxon>Eutheria</taxon>
        <taxon>Euarchontoglires</taxon>
        <taxon>Glires</taxon>
        <taxon>Rodentia</taxon>
        <taxon>Myomorpha</taxon>
        <taxon>Muroidea</taxon>
        <taxon>Muridae</taxon>
        <taxon>Murinae</taxon>
        <taxon>Rattus</taxon>
    </lineage>
</organism>
<accession>P01257</accession>
<protein>
    <recommendedName>
        <fullName evidence="5">Calcitonin</fullName>
    </recommendedName>
</protein>
<proteinExistence type="evidence at protein level"/>
<name>CALC_RAT</name>
<feature type="signal peptide">
    <location>
        <begin position="1"/>
        <end position="25"/>
    </location>
</feature>
<feature type="propeptide" id="PRO_0000004062">
    <location>
        <begin position="26"/>
        <end position="82"/>
    </location>
</feature>
<feature type="peptide" id="PRO_0000004063" description="Calcitonin">
    <location>
        <begin position="85"/>
        <end position="116"/>
    </location>
</feature>
<feature type="propeptide" id="PRO_0000004064">
    <location>
        <begin position="121"/>
        <end position="136"/>
    </location>
</feature>
<feature type="region of interest" description="Disordered" evidence="2">
    <location>
        <begin position="64"/>
        <end position="84"/>
    </location>
</feature>
<feature type="region of interest" description="Disordered" evidence="2">
    <location>
        <begin position="114"/>
        <end position="136"/>
    </location>
</feature>
<feature type="compositionally biased region" description="Basic and acidic residues" evidence="2">
    <location>
        <begin position="118"/>
        <end position="130"/>
    </location>
</feature>
<feature type="modified residue" description="Phosphoserine" evidence="8">
    <location>
        <position position="42"/>
    </location>
</feature>
<feature type="modified residue" description="Proline amide" evidence="4">
    <location>
        <position position="116"/>
    </location>
</feature>
<feature type="glycosylation site" description="N-linked (GlcNAc...) asparagine" evidence="6">
    <location>
        <position position="87"/>
    </location>
</feature>
<feature type="disulfide bond" evidence="3">
    <location>
        <begin position="85"/>
        <end position="91"/>
    </location>
</feature>
<comment type="function">
    <text evidence="1">Calcitonin is a peptide hormone that causes a rapid but short-lived drop in the level of calcium and phosphate in blood by promoting the incorporation of those ions in the bones. Calcitonin function is mediated by the calcitonin receptor/CALCR and the CALCR-RAMP2 (AMYR2) receptor complex (By similarity).</text>
</comment>
<comment type="subcellular location">
    <subcellularLocation>
        <location>Secreted</location>
    </subcellularLocation>
</comment>
<comment type="alternative products">
    <event type="alternative splicing"/>
    <isoform>
        <id>P01257-1</id>
        <name>Calcitonin</name>
        <sequence type="displayed"/>
    </isoform>
    <isoform>
        <id>P01256-1</id>
        <name>Calcitonin-gene related peptide I</name>
        <sequence type="external"/>
    </isoform>
</comment>
<comment type="similarity">
    <text evidence="6">Belongs to the calcitonin family.</text>
</comment>
<keyword id="KW-0025">Alternative splicing</keyword>
<keyword id="KW-0027">Amidation</keyword>
<keyword id="KW-0165">Cleavage on pair of basic residues</keyword>
<keyword id="KW-0903">Direct protein sequencing</keyword>
<keyword id="KW-1015">Disulfide bond</keyword>
<keyword id="KW-0325">Glycoprotein</keyword>
<keyword id="KW-0372">Hormone</keyword>
<keyword id="KW-0597">Phosphoprotein</keyword>
<keyword id="KW-1185">Reference proteome</keyword>
<keyword id="KW-0964">Secreted</keyword>
<keyword id="KW-0732">Signal</keyword>
<gene>
    <name evidence="7" type="primary">Calca</name>
    <name type="synonym">Calc</name>
</gene>
<dbReference type="EMBL" id="V01230">
    <property type="protein sequence ID" value="CAA24540.1"/>
    <property type="molecule type" value="mRNA"/>
</dbReference>
<dbReference type="EMBL" id="V01228">
    <property type="protein sequence ID" value="CAA24538.1"/>
    <property type="molecule type" value="mRNA"/>
</dbReference>
<dbReference type="EMBL" id="V01229">
    <property type="protein sequence ID" value="CAA24539.1"/>
    <property type="molecule type" value="mRNA"/>
</dbReference>
<dbReference type="EMBL" id="M26137">
    <property type="protein sequence ID" value="AAA40849.1"/>
    <property type="molecule type" value="mRNA"/>
</dbReference>
<dbReference type="EMBL" id="M31027">
    <property type="protein sequence ID" value="AAB59681.1"/>
    <property type="molecule type" value="Genomic_DNA"/>
</dbReference>
<dbReference type="EMBL" id="L00109">
    <property type="protein sequence ID" value="AAB59681.1"/>
    <property type="status" value="JOINED"/>
    <property type="molecule type" value="Genomic_DNA"/>
</dbReference>
<dbReference type="EMBL" id="L00110">
    <property type="protein sequence ID" value="AAB59681.1"/>
    <property type="status" value="JOINED"/>
    <property type="molecule type" value="Genomic_DNA"/>
</dbReference>
<dbReference type="PIR" id="A94259">
    <property type="entry name" value="TCRT"/>
</dbReference>
<dbReference type="RefSeq" id="NP_059034.1">
    <molecule id="P01257-1"/>
    <property type="nucleotide sequence ID" value="NM_017338.2"/>
</dbReference>
<dbReference type="RefSeq" id="XP_008757898.1">
    <molecule id="P01257-1"/>
    <property type="nucleotide sequence ID" value="XM_008759676.4"/>
</dbReference>
<dbReference type="SMR" id="P01257"/>
<dbReference type="BioGRID" id="246427">
    <property type="interactions" value="3"/>
</dbReference>
<dbReference type="FunCoup" id="P01257">
    <property type="interactions" value="154"/>
</dbReference>
<dbReference type="STRING" id="10116.ENSRNOP00000014948"/>
<dbReference type="GlyCosmos" id="P01257">
    <property type="glycosylation" value="1 site, No reported glycans"/>
</dbReference>
<dbReference type="GlyGen" id="P01257">
    <property type="glycosylation" value="1 site"/>
</dbReference>
<dbReference type="iPTMnet" id="P01257"/>
<dbReference type="PhosphoSitePlus" id="P01257"/>
<dbReference type="PaxDb" id="10116-ENSRNOP00000014948"/>
<dbReference type="Ensembl" id="ENSRNOT00000014948.6">
    <molecule id="P01257-1"/>
    <property type="protein sequence ID" value="ENSRNOP00000014948.2"/>
    <property type="gene ID" value="ENSRNOG00000011130.9"/>
</dbReference>
<dbReference type="GeneID" id="24241"/>
<dbReference type="AGR" id="RGD:2254"/>
<dbReference type="CTD" id="796"/>
<dbReference type="RGD" id="2254">
    <property type="gene designation" value="Calca"/>
</dbReference>
<dbReference type="eggNOG" id="ENOG502RZI5">
    <property type="taxonomic scope" value="Eukaryota"/>
</dbReference>
<dbReference type="GeneTree" id="ENSGT00940000162876"/>
<dbReference type="HOGENOM" id="CLU_122444_0_0_1"/>
<dbReference type="InParanoid" id="P01257"/>
<dbReference type="OrthoDB" id="9929923at2759"/>
<dbReference type="PhylomeDB" id="P01257"/>
<dbReference type="TreeFam" id="TF333069"/>
<dbReference type="Reactome" id="R-RNO-419812">
    <property type="pathway name" value="Calcitonin-like ligand receptors"/>
</dbReference>
<dbReference type="Proteomes" id="UP000002494">
    <property type="component" value="Chromosome 1"/>
</dbReference>
<dbReference type="Bgee" id="ENSRNOG00000011130">
    <property type="expression patterns" value="Expressed in stomach and 8 other cell types or tissues"/>
</dbReference>
<dbReference type="ExpressionAtlas" id="P01257">
    <property type="expression patterns" value="baseline and differential"/>
</dbReference>
<dbReference type="GO" id="GO:0030424">
    <property type="term" value="C:axon"/>
    <property type="evidence" value="ECO:0000314"/>
    <property type="project" value="RGD"/>
</dbReference>
<dbReference type="GO" id="GO:0005737">
    <property type="term" value="C:cytoplasm"/>
    <property type="evidence" value="ECO:0000266"/>
    <property type="project" value="RGD"/>
</dbReference>
<dbReference type="GO" id="GO:0005576">
    <property type="term" value="C:extracellular region"/>
    <property type="evidence" value="ECO:0000266"/>
    <property type="project" value="RGD"/>
</dbReference>
<dbReference type="GO" id="GO:0005615">
    <property type="term" value="C:extracellular space"/>
    <property type="evidence" value="ECO:0000314"/>
    <property type="project" value="MGI"/>
</dbReference>
<dbReference type="GO" id="GO:0098686">
    <property type="term" value="C:hippocampal mossy fiber to CA3 synapse"/>
    <property type="evidence" value="ECO:0000314"/>
    <property type="project" value="SynGO"/>
</dbReference>
<dbReference type="GO" id="GO:0043005">
    <property type="term" value="C:neuron projection"/>
    <property type="evidence" value="ECO:0000266"/>
    <property type="project" value="RGD"/>
</dbReference>
<dbReference type="GO" id="GO:0043025">
    <property type="term" value="C:neuronal cell body"/>
    <property type="evidence" value="ECO:0000314"/>
    <property type="project" value="RGD"/>
</dbReference>
<dbReference type="GO" id="GO:0098992">
    <property type="term" value="C:neuronal dense core vesicle"/>
    <property type="evidence" value="ECO:0000314"/>
    <property type="project" value="SynGO"/>
</dbReference>
<dbReference type="GO" id="GO:0043195">
    <property type="term" value="C:terminal bouton"/>
    <property type="evidence" value="ECO:0000266"/>
    <property type="project" value="RGD"/>
</dbReference>
<dbReference type="GO" id="GO:0031716">
    <property type="term" value="F:calcitonin receptor binding"/>
    <property type="evidence" value="ECO:0000266"/>
    <property type="project" value="RGD"/>
</dbReference>
<dbReference type="GO" id="GO:0005179">
    <property type="term" value="F:hormone activity"/>
    <property type="evidence" value="ECO:0000266"/>
    <property type="project" value="RGD"/>
</dbReference>
<dbReference type="GO" id="GO:0042802">
    <property type="term" value="F:identical protein binding"/>
    <property type="evidence" value="ECO:0000266"/>
    <property type="project" value="RGD"/>
</dbReference>
<dbReference type="GO" id="GO:0005184">
    <property type="term" value="F:neuropeptide hormone activity"/>
    <property type="evidence" value="ECO:0000304"/>
    <property type="project" value="RGD"/>
</dbReference>
<dbReference type="GO" id="GO:0044877">
    <property type="term" value="F:protein-containing complex binding"/>
    <property type="evidence" value="ECO:0000266"/>
    <property type="project" value="RGD"/>
</dbReference>
<dbReference type="GO" id="GO:0005102">
    <property type="term" value="F:signaling receptor binding"/>
    <property type="evidence" value="ECO:0000266"/>
    <property type="project" value="RGD"/>
</dbReference>
<dbReference type="GO" id="GO:0007189">
    <property type="term" value="P:adenylate cyclase-activating G protein-coupled receptor signaling pathway"/>
    <property type="evidence" value="ECO:0000266"/>
    <property type="project" value="RGD"/>
</dbReference>
<dbReference type="GO" id="GO:0150060">
    <property type="term" value="P:amylin receptor 2 signaling pathway"/>
    <property type="evidence" value="ECO:0000266"/>
    <property type="project" value="RGD"/>
</dbReference>
<dbReference type="GO" id="GO:0001984">
    <property type="term" value="P:artery vasodilation involved in baroreceptor response to increased systemic arterial blood pressure"/>
    <property type="evidence" value="ECO:0000266"/>
    <property type="project" value="RGD"/>
</dbReference>
<dbReference type="GO" id="GO:0097646">
    <property type="term" value="P:calcitonin family receptor signaling pathway"/>
    <property type="evidence" value="ECO:0000266"/>
    <property type="project" value="RGD"/>
</dbReference>
<dbReference type="GO" id="GO:1990408">
    <property type="term" value="P:calcitonin gene-related peptide receptor signaling pathway"/>
    <property type="evidence" value="ECO:0000266"/>
    <property type="project" value="RGD"/>
</dbReference>
<dbReference type="GO" id="GO:0007155">
    <property type="term" value="P:cell adhesion"/>
    <property type="evidence" value="ECO:0000266"/>
    <property type="project" value="RGD"/>
</dbReference>
<dbReference type="GO" id="GO:1990090">
    <property type="term" value="P:cellular response to nerve growth factor stimulus"/>
    <property type="evidence" value="ECO:0000270"/>
    <property type="project" value="RGD"/>
</dbReference>
<dbReference type="GO" id="GO:0071356">
    <property type="term" value="P:cellular response to tumor necrosis factor"/>
    <property type="evidence" value="ECO:0000270"/>
    <property type="project" value="RGD"/>
</dbReference>
<dbReference type="GO" id="GO:0050965">
    <property type="term" value="P:detection of temperature stimulus involved in sensory perception of pain"/>
    <property type="evidence" value="ECO:0000266"/>
    <property type="project" value="RGD"/>
</dbReference>
<dbReference type="GO" id="GO:0007566">
    <property type="term" value="P:embryo implantation"/>
    <property type="evidence" value="ECO:0000266"/>
    <property type="project" value="RGD"/>
</dbReference>
<dbReference type="GO" id="GO:0043542">
    <property type="term" value="P:endothelial cell migration"/>
    <property type="evidence" value="ECO:0000266"/>
    <property type="project" value="RGD"/>
</dbReference>
<dbReference type="GO" id="GO:0001935">
    <property type="term" value="P:endothelial cell proliferation"/>
    <property type="evidence" value="ECO:0000266"/>
    <property type="project" value="RGD"/>
</dbReference>
<dbReference type="GO" id="GO:0007631">
    <property type="term" value="P:feeding behavior"/>
    <property type="evidence" value="ECO:0000266"/>
    <property type="project" value="RGD"/>
</dbReference>
<dbReference type="GO" id="GO:0002031">
    <property type="term" value="P:G protein-coupled receptor internalization"/>
    <property type="evidence" value="ECO:0000266"/>
    <property type="project" value="RGD"/>
</dbReference>
<dbReference type="GO" id="GO:0006954">
    <property type="term" value="P:inflammatory response"/>
    <property type="evidence" value="ECO:0000266"/>
    <property type="project" value="RGD"/>
</dbReference>
<dbReference type="GO" id="GO:0006874">
    <property type="term" value="P:intracellular calcium ion homeostasis"/>
    <property type="evidence" value="ECO:0000266"/>
    <property type="project" value="RGD"/>
</dbReference>
<dbReference type="GO" id="GO:0007159">
    <property type="term" value="P:leukocyte cell-cell adhesion"/>
    <property type="evidence" value="ECO:0000266"/>
    <property type="project" value="RGD"/>
</dbReference>
<dbReference type="GO" id="GO:0002548">
    <property type="term" value="P:monocyte chemotaxis"/>
    <property type="evidence" value="ECO:0000266"/>
    <property type="project" value="RGD"/>
</dbReference>
<dbReference type="GO" id="GO:0045776">
    <property type="term" value="P:negative regulation of blood pressure"/>
    <property type="evidence" value="ECO:0000315"/>
    <property type="project" value="RGD"/>
</dbReference>
<dbReference type="GO" id="GO:0045779">
    <property type="term" value="P:negative regulation of bone resorption"/>
    <property type="evidence" value="ECO:0000266"/>
    <property type="project" value="RGD"/>
</dbReference>
<dbReference type="GO" id="GO:0010523">
    <property type="term" value="P:negative regulation of calcium ion transport into cytosol"/>
    <property type="evidence" value="ECO:0000266"/>
    <property type="project" value="RGD"/>
</dbReference>
<dbReference type="GO" id="GO:0045892">
    <property type="term" value="P:negative regulation of DNA-templated transcription"/>
    <property type="evidence" value="ECO:0000266"/>
    <property type="project" value="RGD"/>
</dbReference>
<dbReference type="GO" id="GO:0030279">
    <property type="term" value="P:negative regulation of ossification"/>
    <property type="evidence" value="ECO:0000266"/>
    <property type="project" value="RGD"/>
</dbReference>
<dbReference type="GO" id="GO:0045671">
    <property type="term" value="P:negative regulation of osteoclast differentiation"/>
    <property type="evidence" value="ECO:0000266"/>
    <property type="project" value="RGD"/>
</dbReference>
<dbReference type="GO" id="GO:0045986">
    <property type="term" value="P:negative regulation of smooth muscle contraction"/>
    <property type="evidence" value="ECO:0000315"/>
    <property type="project" value="RGD"/>
</dbReference>
<dbReference type="GO" id="GO:0007218">
    <property type="term" value="P:neuropeptide signaling pathway"/>
    <property type="evidence" value="ECO:0000266"/>
    <property type="project" value="RGD"/>
</dbReference>
<dbReference type="GO" id="GO:0001503">
    <property type="term" value="P:ossification"/>
    <property type="evidence" value="ECO:0000266"/>
    <property type="project" value="RGD"/>
</dbReference>
<dbReference type="GO" id="GO:0007200">
    <property type="term" value="P:phospholipase C-activating G protein-coupled receptor signaling pathway"/>
    <property type="evidence" value="ECO:0000266"/>
    <property type="project" value="RGD"/>
</dbReference>
<dbReference type="GO" id="GO:0045785">
    <property type="term" value="P:positive regulation of cell adhesion"/>
    <property type="evidence" value="ECO:0000266"/>
    <property type="project" value="RGD"/>
</dbReference>
<dbReference type="GO" id="GO:0007204">
    <property type="term" value="P:positive regulation of cytosolic calcium ion concentration"/>
    <property type="evidence" value="ECO:0000266"/>
    <property type="project" value="RGD"/>
</dbReference>
<dbReference type="GO" id="GO:0032730">
    <property type="term" value="P:positive regulation of interleukin-1 alpha production"/>
    <property type="evidence" value="ECO:0000266"/>
    <property type="project" value="RGD"/>
</dbReference>
<dbReference type="GO" id="GO:0032757">
    <property type="term" value="P:positive regulation of interleukin-8 production"/>
    <property type="evidence" value="ECO:0000266"/>
    <property type="project" value="RGD"/>
</dbReference>
<dbReference type="GO" id="GO:0045651">
    <property type="term" value="P:positive regulation of macrophage differentiation"/>
    <property type="evidence" value="ECO:0000266"/>
    <property type="project" value="RGD"/>
</dbReference>
<dbReference type="GO" id="GO:0031623">
    <property type="term" value="P:receptor internalization"/>
    <property type="evidence" value="ECO:0000266"/>
    <property type="project" value="RGD"/>
</dbReference>
<dbReference type="GO" id="GO:0051480">
    <property type="term" value="P:regulation of cytosolic calcium ion concentration"/>
    <property type="evidence" value="ECO:0000266"/>
    <property type="project" value="RGD"/>
</dbReference>
<dbReference type="GO" id="GO:0009408">
    <property type="term" value="P:response to heat"/>
    <property type="evidence" value="ECO:0000266"/>
    <property type="project" value="RGD"/>
</dbReference>
<dbReference type="GO" id="GO:0048265">
    <property type="term" value="P:response to pain"/>
    <property type="evidence" value="ECO:0000266"/>
    <property type="project" value="RGD"/>
</dbReference>
<dbReference type="GO" id="GO:0006939">
    <property type="term" value="P:smooth muscle contraction"/>
    <property type="evidence" value="ECO:0000266"/>
    <property type="project" value="RGD"/>
</dbReference>
<dbReference type="GO" id="GO:0001944">
    <property type="term" value="P:vasculature development"/>
    <property type="evidence" value="ECO:0000266"/>
    <property type="project" value="RGD"/>
</dbReference>
<dbReference type="GO" id="GO:0042311">
    <property type="term" value="P:vasodilation"/>
    <property type="evidence" value="ECO:0000314"/>
    <property type="project" value="RGD"/>
</dbReference>
<dbReference type="InterPro" id="IPR021118">
    <property type="entry name" value="Calcitonin"/>
</dbReference>
<dbReference type="InterPro" id="IPR021117">
    <property type="entry name" value="Calcitonin-like"/>
</dbReference>
<dbReference type="InterPro" id="IPR021116">
    <property type="entry name" value="Calcitonin/adrenomedullin"/>
</dbReference>
<dbReference type="InterPro" id="IPR018360">
    <property type="entry name" value="Calcitonin_CS"/>
</dbReference>
<dbReference type="InterPro" id="IPR001693">
    <property type="entry name" value="Calcitonin_peptide-like"/>
</dbReference>
<dbReference type="PANTHER" id="PTHR10505:SF16">
    <property type="entry name" value="CALCITONIN"/>
    <property type="match status" value="1"/>
</dbReference>
<dbReference type="PANTHER" id="PTHR10505">
    <property type="entry name" value="CALCITONIN-RELATED"/>
    <property type="match status" value="1"/>
</dbReference>
<dbReference type="Pfam" id="PF00214">
    <property type="entry name" value="Calc_CGRP_IAPP"/>
    <property type="match status" value="1"/>
</dbReference>
<dbReference type="PRINTS" id="PR00270">
    <property type="entry name" value="CALCITONINA"/>
</dbReference>
<dbReference type="SMART" id="SM00113">
    <property type="entry name" value="CALCITONIN"/>
    <property type="match status" value="1"/>
</dbReference>
<dbReference type="PROSITE" id="PS00258">
    <property type="entry name" value="CALCITONIN"/>
    <property type="match status" value="1"/>
</dbReference>
<evidence type="ECO:0000250" key="1">
    <source>
        <dbReference type="UniProtKB" id="P01258"/>
    </source>
</evidence>
<evidence type="ECO:0000256" key="2">
    <source>
        <dbReference type="SAM" id="MobiDB-lite"/>
    </source>
</evidence>
<evidence type="ECO:0000269" key="3">
    <source>
    </source>
</evidence>
<evidence type="ECO:0000269" key="4">
    <source>
    </source>
</evidence>
<evidence type="ECO:0000303" key="5">
    <source>
    </source>
</evidence>
<evidence type="ECO:0000305" key="6"/>
<evidence type="ECO:0000312" key="7">
    <source>
        <dbReference type="RGD" id="2254"/>
    </source>
</evidence>
<evidence type="ECO:0007744" key="8">
    <source>
    </source>
</evidence>
<reference key="1">
    <citation type="journal article" date="1981" name="Science">
        <title>Calcitonin messenger RNA encodes multiple polypeptides in a single precursor.</title>
        <authorList>
            <person name="Jacobs J.W."/>
            <person name="Goodman R.H."/>
            <person name="Chin W.W."/>
            <person name="Dee P.C."/>
            <person name="Habener J.F."/>
            <person name="Bell N.H."/>
            <person name="Potts J.T. Jr."/>
        </authorList>
    </citation>
    <scope>NUCLEOTIDE SEQUENCE [GENOMIC DNA]</scope>
    <scope>AMIDATION AT PRO-116</scope>
</reference>
<reference key="2">
    <citation type="journal article" date="1984" name="Biochem. Soc. Symp.">
        <title>Alternative RNA processing events as a critical developmental regulatory strategy in neuroendocrine gene expression.</title>
        <authorList>
            <person name="Rosenfeld M.G."/>
            <person name="Amara S.G."/>
            <person name="Evans R.M."/>
        </authorList>
    </citation>
    <scope>NUCLEOTIDE SEQUENCE</scope>
</reference>
<reference key="3">
    <citation type="journal article" date="1980" name="Proc. Natl. Acad. Sci. U.S.A.">
        <title>Characterization of rat calcitonin mRNA.</title>
        <authorList>
            <person name="Amara S.G."/>
            <person name="David D.N."/>
            <person name="Rosenfeld M.G."/>
            <person name="Roos B.A."/>
            <person name="Evans R.M."/>
        </authorList>
    </citation>
    <scope>NUCLEOTIDE SEQUENCE OF 83-136</scope>
</reference>
<reference key="4">
    <citation type="journal article" date="1976" name="Eur. J. Biochem.">
        <title>The complete amino-acid sequence of rat thyrocalcitonin.</title>
        <authorList>
            <person name="Raulais D."/>
            <person name="Hagaman J."/>
            <person name="Ontjes D.A."/>
            <person name="Lundblad R.L."/>
            <person name="Kingdon H.S."/>
        </authorList>
    </citation>
    <scope>PROTEIN SEQUENCE OF 85-116</scope>
</reference>
<reference key="5">
    <citation type="journal article" date="2012" name="Nat. Commun.">
        <title>Quantitative maps of protein phosphorylation sites across 14 different rat organs and tissues.</title>
        <authorList>
            <person name="Lundby A."/>
            <person name="Secher A."/>
            <person name="Lage K."/>
            <person name="Nordsborg N.B."/>
            <person name="Dmytriyev A."/>
            <person name="Lundby C."/>
            <person name="Olsen J.V."/>
        </authorList>
    </citation>
    <scope>PHOSPHORYLATION [LARGE SCALE ANALYSIS] AT SER-42</scope>
    <scope>IDENTIFICATION BY MASS SPECTROMETRY [LARGE SCALE ANALYSIS]</scope>
</reference>